<proteinExistence type="inferred from homology"/>
<gene>
    <name type="primary">rpl33</name>
</gene>
<geneLocation type="chloroplast"/>
<reference key="1">
    <citation type="journal article" date="1988" name="J. Mol. Biol.">
        <title>Structure and organization of Marchantia polymorpha chloroplast genome. III. Gene organization of the large single copy region from rbcL to trnI(CAU).</title>
        <authorList>
            <person name="Fukuzawa H."/>
            <person name="Kohchi T."/>
            <person name="Sano T."/>
            <person name="Shirai H."/>
            <person name="Umesono K."/>
            <person name="Inokuchi H."/>
            <person name="Ozeki H."/>
            <person name="Ohyama K."/>
        </authorList>
    </citation>
    <scope>NUCLEOTIDE SEQUENCE [GENOMIC DNA]</scope>
</reference>
<reference key="2">
    <citation type="journal article" date="1986" name="Nature">
        <title>Chloroplast gene organization deduced from complete sequence of liverwort Marchantia polymorpha chloroplast DNA.</title>
        <authorList>
            <person name="Ohyama K."/>
            <person name="Fukuzawa H."/>
            <person name="Kohchi T."/>
            <person name="Shirai H."/>
            <person name="Sano T."/>
            <person name="Sano S."/>
            <person name="Umesono K."/>
            <person name="Shiki Y."/>
            <person name="Takeuchi M."/>
            <person name="Chang Z."/>
            <person name="Aota S."/>
            <person name="Inokuchi H."/>
            <person name="Ozeki H."/>
        </authorList>
    </citation>
    <scope>NUCLEOTIDE SEQUENCE [LARGE SCALE GENOMIC DNA]</scope>
</reference>
<comment type="subcellular location">
    <subcellularLocation>
        <location>Plastid</location>
        <location>Chloroplast</location>
    </subcellularLocation>
</comment>
<comment type="similarity">
    <text evidence="2">Belongs to the bacterial ribosomal protein bL33 family.</text>
</comment>
<sequence length="65" mass="7782">MAKSKDIRVTINLECINCAQNDEKRKKGISRYTTQKNRRNTPIRLELKKFCCYCNKHTIHKEIKK</sequence>
<dbReference type="EMBL" id="X04465">
    <property type="protein sequence ID" value="CAA28106.1"/>
    <property type="molecule type" value="Genomic_DNA"/>
</dbReference>
<dbReference type="PIR" id="A02834">
    <property type="entry name" value="R5LV33"/>
</dbReference>
<dbReference type="RefSeq" id="NP_039320.1">
    <property type="nucleotide sequence ID" value="NC_001319.1"/>
</dbReference>
<dbReference type="GeneID" id="2702558"/>
<dbReference type="GO" id="GO:0009507">
    <property type="term" value="C:chloroplast"/>
    <property type="evidence" value="ECO:0007669"/>
    <property type="project" value="UniProtKB-SubCell"/>
</dbReference>
<dbReference type="GO" id="GO:1990904">
    <property type="term" value="C:ribonucleoprotein complex"/>
    <property type="evidence" value="ECO:0007669"/>
    <property type="project" value="UniProtKB-KW"/>
</dbReference>
<dbReference type="GO" id="GO:0005840">
    <property type="term" value="C:ribosome"/>
    <property type="evidence" value="ECO:0007669"/>
    <property type="project" value="UniProtKB-KW"/>
</dbReference>
<dbReference type="GO" id="GO:0003735">
    <property type="term" value="F:structural constituent of ribosome"/>
    <property type="evidence" value="ECO:0007669"/>
    <property type="project" value="InterPro"/>
</dbReference>
<dbReference type="GO" id="GO:0006412">
    <property type="term" value="P:translation"/>
    <property type="evidence" value="ECO:0007669"/>
    <property type="project" value="UniProtKB-UniRule"/>
</dbReference>
<dbReference type="Gene3D" id="2.20.28.120">
    <property type="entry name" value="Ribosomal protein L33"/>
    <property type="match status" value="1"/>
</dbReference>
<dbReference type="HAMAP" id="MF_00294">
    <property type="entry name" value="Ribosomal_bL33"/>
    <property type="match status" value="1"/>
</dbReference>
<dbReference type="InterPro" id="IPR001705">
    <property type="entry name" value="Ribosomal_bL33"/>
</dbReference>
<dbReference type="InterPro" id="IPR018264">
    <property type="entry name" value="Ribosomal_bL33_CS"/>
</dbReference>
<dbReference type="InterPro" id="IPR038584">
    <property type="entry name" value="Ribosomal_bL33_sf"/>
</dbReference>
<dbReference type="InterPro" id="IPR011332">
    <property type="entry name" value="Ribosomal_zn-bd"/>
</dbReference>
<dbReference type="NCBIfam" id="NF001764">
    <property type="entry name" value="PRK00504.1"/>
    <property type="match status" value="1"/>
</dbReference>
<dbReference type="NCBIfam" id="NF001860">
    <property type="entry name" value="PRK00595.1"/>
    <property type="match status" value="1"/>
</dbReference>
<dbReference type="NCBIfam" id="TIGR01023">
    <property type="entry name" value="rpmG_bact"/>
    <property type="match status" value="1"/>
</dbReference>
<dbReference type="PANTHER" id="PTHR43168">
    <property type="entry name" value="50S RIBOSOMAL PROTEIN L33, CHLOROPLASTIC"/>
    <property type="match status" value="1"/>
</dbReference>
<dbReference type="PANTHER" id="PTHR43168:SF2">
    <property type="entry name" value="LARGE RIBOSOMAL SUBUNIT PROTEIN BL33C"/>
    <property type="match status" value="1"/>
</dbReference>
<dbReference type="Pfam" id="PF00471">
    <property type="entry name" value="Ribosomal_L33"/>
    <property type="match status" value="1"/>
</dbReference>
<dbReference type="SUPFAM" id="SSF57829">
    <property type="entry name" value="Zn-binding ribosomal proteins"/>
    <property type="match status" value="1"/>
</dbReference>
<dbReference type="PROSITE" id="PS00582">
    <property type="entry name" value="RIBOSOMAL_L33"/>
    <property type="match status" value="1"/>
</dbReference>
<keyword id="KW-0150">Chloroplast</keyword>
<keyword id="KW-0934">Plastid</keyword>
<keyword id="KW-0687">Ribonucleoprotein</keyword>
<keyword id="KW-0689">Ribosomal protein</keyword>
<evidence type="ECO:0000250" key="1"/>
<evidence type="ECO:0000305" key="2"/>
<accession>P06392</accession>
<name>RK33_MARPO</name>
<feature type="initiator methionine" description="Removed" evidence="1">
    <location>
        <position position="1"/>
    </location>
</feature>
<feature type="chain" id="PRO_0000170287" description="Large ribosomal subunit protein bL33c">
    <location>
        <begin position="2"/>
        <end position="65"/>
    </location>
</feature>
<organism>
    <name type="scientific">Marchantia polymorpha</name>
    <name type="common">Common liverwort</name>
    <name type="synonym">Marchantia aquatica</name>
    <dbReference type="NCBI Taxonomy" id="3197"/>
    <lineage>
        <taxon>Eukaryota</taxon>
        <taxon>Viridiplantae</taxon>
        <taxon>Streptophyta</taxon>
        <taxon>Embryophyta</taxon>
        <taxon>Marchantiophyta</taxon>
        <taxon>Marchantiopsida</taxon>
        <taxon>Marchantiidae</taxon>
        <taxon>Marchantiales</taxon>
        <taxon>Marchantiaceae</taxon>
        <taxon>Marchantia</taxon>
    </lineage>
</organism>
<protein>
    <recommendedName>
        <fullName evidence="2">Large ribosomal subunit protein bL33c</fullName>
    </recommendedName>
    <alternativeName>
        <fullName>50S ribosomal protein L33, chloroplastic</fullName>
    </alternativeName>
</protein>